<protein>
    <recommendedName>
        <fullName>Outer membrane lipoprotein omp19</fullName>
    </recommendedName>
    <alternativeName>
        <fullName>18 kDa immunoreactive antigen</fullName>
    </alternativeName>
    <alternativeName>
        <fullName>19 kDa OMP</fullName>
    </alternativeName>
    <alternativeName>
        <fullName>Minor outer membrane protein omp19</fullName>
    </alternativeName>
</protein>
<dbReference type="EMBL" id="L27997">
    <property type="protein sequence ID" value="AAB06277.1"/>
    <property type="molecule type" value="Genomic_DNA"/>
</dbReference>
<dbReference type="EMBL" id="AE017223">
    <property type="protein sequence ID" value="AAX75216.1"/>
    <property type="molecule type" value="Genomic_DNA"/>
</dbReference>
<dbReference type="RefSeq" id="WP_002964998.1">
    <property type="nucleotide sequence ID" value="NC_006932.1"/>
</dbReference>
<dbReference type="SMR" id="P0C109"/>
<dbReference type="EnsemblBacteria" id="AAX75216">
    <property type="protein sequence ID" value="AAX75216"/>
    <property type="gene ID" value="BruAb1_1906"/>
</dbReference>
<dbReference type="KEGG" id="bmb:BruAb1_1906"/>
<dbReference type="HOGENOM" id="CLU_103254_0_0_5"/>
<dbReference type="PRO" id="PR:P0C109"/>
<dbReference type="Proteomes" id="UP000000540">
    <property type="component" value="Chromosome I"/>
</dbReference>
<dbReference type="GO" id="GO:0009279">
    <property type="term" value="C:cell outer membrane"/>
    <property type="evidence" value="ECO:0007669"/>
    <property type="project" value="UniProtKB-SubCell"/>
</dbReference>
<dbReference type="GO" id="GO:0004866">
    <property type="term" value="F:endopeptidase inhibitor activity"/>
    <property type="evidence" value="ECO:0007669"/>
    <property type="project" value="InterPro"/>
</dbReference>
<dbReference type="Gene3D" id="2.40.128.10">
    <property type="match status" value="1"/>
</dbReference>
<dbReference type="InterPro" id="IPR021140">
    <property type="entry name" value="Inh/Omp19"/>
</dbReference>
<dbReference type="InterPro" id="IPR010571">
    <property type="entry name" value="OM_lipoprot_Omp19_bac"/>
</dbReference>
<dbReference type="InterPro" id="IPR016085">
    <property type="entry name" value="Protease_inh_b-brl_dom"/>
</dbReference>
<dbReference type="Pfam" id="PF02974">
    <property type="entry name" value="Inh"/>
    <property type="match status" value="1"/>
</dbReference>
<dbReference type="PIRSF" id="PIRSF034005">
    <property type="entry name" value="OM_lipoprot_Omp19_bac"/>
    <property type="match status" value="1"/>
</dbReference>
<dbReference type="SUPFAM" id="SSF50882">
    <property type="entry name" value="beta-Barrel protease inhibitors"/>
    <property type="match status" value="1"/>
</dbReference>
<dbReference type="PROSITE" id="PS51257">
    <property type="entry name" value="PROKAR_LIPOPROTEIN"/>
    <property type="match status" value="1"/>
</dbReference>
<feature type="signal peptide" evidence="2">
    <location>
        <begin position="1"/>
        <end position="20"/>
    </location>
</feature>
<feature type="chain" id="PRO_0000018243" description="Outer membrane lipoprotein omp19">
    <location>
        <begin position="21"/>
        <end position="177"/>
    </location>
</feature>
<feature type="region of interest" description="Disordered" evidence="1">
    <location>
        <begin position="28"/>
        <end position="79"/>
    </location>
</feature>
<feature type="compositionally biased region" description="Polar residues" evidence="1">
    <location>
        <begin position="50"/>
        <end position="77"/>
    </location>
</feature>
<feature type="lipid moiety-binding region" description="N-palmitoyl cysteine" evidence="2">
    <location>
        <position position="21"/>
    </location>
</feature>
<feature type="lipid moiety-binding region" description="S-diacylglycerol cysteine" evidence="2">
    <location>
        <position position="21"/>
    </location>
</feature>
<accession>P0C109</accession>
<accession>P0A3P3</accession>
<accession>Q44663</accession>
<accession>Q44699</accession>
<accession>Q57AW8</accession>
<gene>
    <name type="primary">omp19</name>
    <name type="ordered locus">BruAb1_1906</name>
</gene>
<reference key="1">
    <citation type="journal article" date="1996" name="Infect. Immun.">
        <title>Molecular characterization, occurrence, and immunogenicity in infected sheep and cattle of two minor outer membrane proteins of Brucella abortus.</title>
        <authorList>
            <person name="Tibor A."/>
            <person name="Saman E."/>
            <person name="de Wergifosse P."/>
            <person name="Cloeckaert A."/>
            <person name="Limet J.N."/>
            <person name="Letesson J.-J."/>
        </authorList>
    </citation>
    <scope>NUCLEOTIDE SEQUENCE [GENOMIC DNA]</scope>
    <source>
        <strain>544 / Biovar 1</strain>
    </source>
</reference>
<reference key="2">
    <citation type="journal article" date="2005" name="J. Bacteriol.">
        <title>Completion of the genome sequence of Brucella abortus and comparison to the highly similar genomes of Brucella melitensis and Brucella suis.</title>
        <authorList>
            <person name="Halling S.M."/>
            <person name="Peterson-Burch B.D."/>
            <person name="Bricker B.J."/>
            <person name="Zuerner R.L."/>
            <person name="Qing Z."/>
            <person name="Li L.-L."/>
            <person name="Kapur V."/>
            <person name="Alt D.P."/>
            <person name="Olsen S.C."/>
        </authorList>
    </citation>
    <scope>NUCLEOTIDE SEQUENCE [LARGE SCALE GENOMIC DNA]</scope>
    <source>
        <strain>9-941</strain>
    </source>
</reference>
<comment type="subcellular location">
    <subcellularLocation>
        <location>Cell outer membrane</location>
        <topology>Lipid-anchor</topology>
    </subcellularLocation>
</comment>
<comment type="miscellaneous">
    <text>Elicits an immune response in humans, mice, sheep and goats infected with B.melitensis or B.abortus, but not in B.abortus-infected cattle.</text>
</comment>
<comment type="similarity">
    <text evidence="2">Belongs to the rhizobiaceae omp19 lipoprotein family.</text>
</comment>
<evidence type="ECO:0000256" key="1">
    <source>
        <dbReference type="SAM" id="MobiDB-lite"/>
    </source>
</evidence>
<evidence type="ECO:0000305" key="2"/>
<name>OMP19_BRUAB</name>
<keyword id="KW-0998">Cell outer membrane</keyword>
<keyword id="KW-0449">Lipoprotein</keyword>
<keyword id="KW-0472">Membrane</keyword>
<keyword id="KW-0564">Palmitate</keyword>
<keyword id="KW-0732">Signal</keyword>
<organism>
    <name type="scientific">Brucella abortus biovar 1 (strain 9-941)</name>
    <dbReference type="NCBI Taxonomy" id="262698"/>
    <lineage>
        <taxon>Bacteria</taxon>
        <taxon>Pseudomonadati</taxon>
        <taxon>Pseudomonadota</taxon>
        <taxon>Alphaproteobacteria</taxon>
        <taxon>Hyphomicrobiales</taxon>
        <taxon>Brucellaceae</taxon>
        <taxon>Brucella/Ochrobactrum group</taxon>
        <taxon>Brucella</taxon>
    </lineage>
</organism>
<sequence>MGISKASLLSLAAAGIVLAGCQSSRLGNLDNVSPPPPPAPVNAVPAGTVQKGNLDSPTQFPNAPSTDMSAQSGTQVASLPPASAPDLTPGAVAGVWNASLGGQSCKIATPQTKYGQGYRAGPLRCPGELANLASWAVNGKQLVLYDANGGTVASLYSSGQGRFDGQTTGGQAVTLSR</sequence>
<proteinExistence type="inferred from homology"/>